<dbReference type="EC" id="2.7.1.30" evidence="1"/>
<dbReference type="EMBL" id="AE000516">
    <property type="protein sequence ID" value="AAK48165.1"/>
    <property type="molecule type" value="Genomic_DNA"/>
</dbReference>
<dbReference type="PIR" id="A70793">
    <property type="entry name" value="A70793"/>
</dbReference>
<dbReference type="RefSeq" id="WP_003899643.1">
    <property type="nucleotide sequence ID" value="NZ_KK341227.1"/>
</dbReference>
<dbReference type="SMR" id="P9WPK0"/>
<dbReference type="KEGG" id="mtc:MT3798"/>
<dbReference type="PATRIC" id="fig|83331.31.peg.4090"/>
<dbReference type="HOGENOM" id="CLU_009281_2_3_11"/>
<dbReference type="UniPathway" id="UPA00618">
    <property type="reaction ID" value="UER00672"/>
</dbReference>
<dbReference type="Proteomes" id="UP000001020">
    <property type="component" value="Chromosome"/>
</dbReference>
<dbReference type="GO" id="GO:0005829">
    <property type="term" value="C:cytosol"/>
    <property type="evidence" value="ECO:0007669"/>
    <property type="project" value="TreeGrafter"/>
</dbReference>
<dbReference type="GO" id="GO:0005524">
    <property type="term" value="F:ATP binding"/>
    <property type="evidence" value="ECO:0007669"/>
    <property type="project" value="UniProtKB-UniRule"/>
</dbReference>
<dbReference type="GO" id="GO:0004370">
    <property type="term" value="F:glycerol kinase activity"/>
    <property type="evidence" value="ECO:0000250"/>
    <property type="project" value="UniProtKB"/>
</dbReference>
<dbReference type="GO" id="GO:0019563">
    <property type="term" value="P:glycerol catabolic process"/>
    <property type="evidence" value="ECO:0007669"/>
    <property type="project" value="UniProtKB-UniRule"/>
</dbReference>
<dbReference type="GO" id="GO:0006071">
    <property type="term" value="P:glycerol metabolic process"/>
    <property type="evidence" value="ECO:0000250"/>
    <property type="project" value="UniProtKB"/>
</dbReference>
<dbReference type="GO" id="GO:0006072">
    <property type="term" value="P:glycerol-3-phosphate metabolic process"/>
    <property type="evidence" value="ECO:0007669"/>
    <property type="project" value="InterPro"/>
</dbReference>
<dbReference type="CDD" id="cd07769">
    <property type="entry name" value="ASKHA_NBD_FGGY_GK"/>
    <property type="match status" value="1"/>
</dbReference>
<dbReference type="FunFam" id="3.30.420.40:FF:000007">
    <property type="entry name" value="Glycerol kinase"/>
    <property type="match status" value="1"/>
</dbReference>
<dbReference type="FunFam" id="3.30.420.40:FF:000008">
    <property type="entry name" value="Glycerol kinase"/>
    <property type="match status" value="1"/>
</dbReference>
<dbReference type="Gene3D" id="3.30.420.40">
    <property type="match status" value="2"/>
</dbReference>
<dbReference type="HAMAP" id="MF_00186">
    <property type="entry name" value="Glycerol_kin"/>
    <property type="match status" value="1"/>
</dbReference>
<dbReference type="InterPro" id="IPR043129">
    <property type="entry name" value="ATPase_NBD"/>
</dbReference>
<dbReference type="InterPro" id="IPR000577">
    <property type="entry name" value="Carb_kinase_FGGY"/>
</dbReference>
<dbReference type="InterPro" id="IPR018483">
    <property type="entry name" value="Carb_kinase_FGGY_CS"/>
</dbReference>
<dbReference type="InterPro" id="IPR018485">
    <property type="entry name" value="FGGY_C"/>
</dbReference>
<dbReference type="InterPro" id="IPR018484">
    <property type="entry name" value="FGGY_N"/>
</dbReference>
<dbReference type="InterPro" id="IPR005999">
    <property type="entry name" value="Glycerol_kin"/>
</dbReference>
<dbReference type="NCBIfam" id="TIGR01311">
    <property type="entry name" value="glycerol_kin"/>
    <property type="match status" value="1"/>
</dbReference>
<dbReference type="NCBIfam" id="NF000756">
    <property type="entry name" value="PRK00047.1"/>
    <property type="match status" value="1"/>
</dbReference>
<dbReference type="PANTHER" id="PTHR10196:SF69">
    <property type="entry name" value="GLYCEROL KINASE"/>
    <property type="match status" value="1"/>
</dbReference>
<dbReference type="PANTHER" id="PTHR10196">
    <property type="entry name" value="SUGAR KINASE"/>
    <property type="match status" value="1"/>
</dbReference>
<dbReference type="Pfam" id="PF02782">
    <property type="entry name" value="FGGY_C"/>
    <property type="match status" value="1"/>
</dbReference>
<dbReference type="Pfam" id="PF00370">
    <property type="entry name" value="FGGY_N"/>
    <property type="match status" value="1"/>
</dbReference>
<dbReference type="PIRSF" id="PIRSF000538">
    <property type="entry name" value="GlpK"/>
    <property type="match status" value="1"/>
</dbReference>
<dbReference type="SUPFAM" id="SSF53067">
    <property type="entry name" value="Actin-like ATPase domain"/>
    <property type="match status" value="2"/>
</dbReference>
<dbReference type="PROSITE" id="PS00933">
    <property type="entry name" value="FGGY_KINASES_1"/>
    <property type="match status" value="1"/>
</dbReference>
<dbReference type="PROSITE" id="PS00445">
    <property type="entry name" value="FGGY_KINASES_2"/>
    <property type="match status" value="1"/>
</dbReference>
<proteinExistence type="inferred from homology"/>
<sequence>MSDAILGEQLAESSDFIAAIDQGTTSTRCMIFDHHGAEVARHQLEHEQILPRAGWVEHNPVEIWERTASVLISVLNATNLSPKDIAALGITNQRETTLVWNRHTGRPYYNAIVWQDTRTDRIASALDRDGRGNLIRRKAGLPPATYFSGGKLQWILENVDGVRAAAENGDALFGTPDTWVLWNLTGGPRGGVHVTDVTNASRTMLMDLETLDWDDELLSLFSIPRAMLPEIASSAPSEPYGVTLATGPVGGEVPITGVLGDQHAAMVGQVCLAPGEAKNTYGTGNFLLLNTGETIVRSNNGLLTTVCYQFGNAKPVYALEGSIAVTGSAVQWLRDQLGIISGAAQSEALARQVPDNGGMYFVPAFSGLFAPYWRSDARGAIVGLSRFNTNAHLARATLEAICYQSRDVVDAMEADSGVRLQVLKVDGGITGNDLCMQIQADVLGVDVVRPVVAETTALGVAYAAGLAVGFWAAPSDLRANWREDKRWTPTWDDDERAAGYAGWRKAVQRTLDWVDVS</sequence>
<comment type="function">
    <text evidence="1">Key enzyme in the regulation of glycerol uptake and metabolism. Catalyzes the phosphorylation of glycerol to yield sn-glycerol 3-phosphate.</text>
</comment>
<comment type="catalytic activity">
    <reaction evidence="1">
        <text>glycerol + ATP = sn-glycerol 3-phosphate + ADP + H(+)</text>
        <dbReference type="Rhea" id="RHEA:21644"/>
        <dbReference type="ChEBI" id="CHEBI:15378"/>
        <dbReference type="ChEBI" id="CHEBI:17754"/>
        <dbReference type="ChEBI" id="CHEBI:30616"/>
        <dbReference type="ChEBI" id="CHEBI:57597"/>
        <dbReference type="ChEBI" id="CHEBI:456216"/>
        <dbReference type="EC" id="2.7.1.30"/>
    </reaction>
</comment>
<comment type="activity regulation">
    <text evidence="1">Inhibited by fructose 1,6-bisphosphate (FBP).</text>
</comment>
<comment type="pathway">
    <text evidence="1">Polyol metabolism; glycerol degradation via glycerol kinase pathway; sn-glycerol 3-phosphate from glycerol: step 1/1.</text>
</comment>
<comment type="similarity">
    <text evidence="1">Belongs to the FGGY kinase family.</text>
</comment>
<reference key="1">
    <citation type="journal article" date="2002" name="J. Bacteriol.">
        <title>Whole-genome comparison of Mycobacterium tuberculosis clinical and laboratory strains.</title>
        <authorList>
            <person name="Fleischmann R.D."/>
            <person name="Alland D."/>
            <person name="Eisen J.A."/>
            <person name="Carpenter L."/>
            <person name="White O."/>
            <person name="Peterson J.D."/>
            <person name="DeBoy R.T."/>
            <person name="Dodson R.J."/>
            <person name="Gwinn M.L."/>
            <person name="Haft D.H."/>
            <person name="Hickey E.K."/>
            <person name="Kolonay J.F."/>
            <person name="Nelson W.C."/>
            <person name="Umayam L.A."/>
            <person name="Ermolaeva M.D."/>
            <person name="Salzberg S.L."/>
            <person name="Delcher A."/>
            <person name="Utterback T.R."/>
            <person name="Weidman J.F."/>
            <person name="Khouri H.M."/>
            <person name="Gill J."/>
            <person name="Mikula A."/>
            <person name="Bishai W."/>
            <person name="Jacobs W.R. Jr."/>
            <person name="Venter J.C."/>
            <person name="Fraser C.M."/>
        </authorList>
    </citation>
    <scope>NUCLEOTIDE SEQUENCE [LARGE SCALE GENOMIC DNA]</scope>
    <source>
        <strain>CDC 1551 / Oshkosh</strain>
    </source>
</reference>
<organism>
    <name type="scientific">Mycobacterium tuberculosis (strain CDC 1551 / Oshkosh)</name>
    <dbReference type="NCBI Taxonomy" id="83331"/>
    <lineage>
        <taxon>Bacteria</taxon>
        <taxon>Bacillati</taxon>
        <taxon>Actinomycetota</taxon>
        <taxon>Actinomycetes</taxon>
        <taxon>Mycobacteriales</taxon>
        <taxon>Mycobacteriaceae</taxon>
        <taxon>Mycobacterium</taxon>
        <taxon>Mycobacterium tuberculosis complex</taxon>
    </lineage>
</organism>
<accession>P9WPK0</accession>
<accession>L0TGG8</accession>
<accession>O69664</accession>
<evidence type="ECO:0000255" key="1">
    <source>
        <dbReference type="HAMAP-Rule" id="MF_00186"/>
    </source>
</evidence>
<gene>
    <name evidence="1" type="primary">glpK</name>
    <name type="ordered locus">MT3798</name>
</gene>
<feature type="chain" id="PRO_0000426938" description="Glycerol kinase">
    <location>
        <begin position="1"/>
        <end position="517"/>
    </location>
</feature>
<feature type="binding site" evidence="1">
    <location>
        <position position="24"/>
    </location>
    <ligand>
        <name>ADP</name>
        <dbReference type="ChEBI" id="CHEBI:456216"/>
    </ligand>
</feature>
<feature type="binding site" evidence="1">
    <location>
        <position position="24"/>
    </location>
    <ligand>
        <name>ATP</name>
        <dbReference type="ChEBI" id="CHEBI:30616"/>
    </ligand>
</feature>
<feature type="binding site" evidence="1">
    <location>
        <position position="24"/>
    </location>
    <ligand>
        <name>sn-glycerol 3-phosphate</name>
        <dbReference type="ChEBI" id="CHEBI:57597"/>
    </ligand>
</feature>
<feature type="binding site" evidence="1">
    <location>
        <position position="25"/>
    </location>
    <ligand>
        <name>ATP</name>
        <dbReference type="ChEBI" id="CHEBI:30616"/>
    </ligand>
</feature>
<feature type="binding site" evidence="1">
    <location>
        <position position="26"/>
    </location>
    <ligand>
        <name>ATP</name>
        <dbReference type="ChEBI" id="CHEBI:30616"/>
    </ligand>
</feature>
<feature type="binding site" evidence="1">
    <location>
        <position position="28"/>
    </location>
    <ligand>
        <name>ADP</name>
        <dbReference type="ChEBI" id="CHEBI:456216"/>
    </ligand>
</feature>
<feature type="binding site" evidence="1">
    <location>
        <position position="94"/>
    </location>
    <ligand>
        <name>glycerol</name>
        <dbReference type="ChEBI" id="CHEBI:17754"/>
    </ligand>
</feature>
<feature type="binding site" evidence="1">
    <location>
        <position position="94"/>
    </location>
    <ligand>
        <name>sn-glycerol 3-phosphate</name>
        <dbReference type="ChEBI" id="CHEBI:57597"/>
    </ligand>
</feature>
<feature type="binding site" evidence="1">
    <location>
        <position position="95"/>
    </location>
    <ligand>
        <name>glycerol</name>
        <dbReference type="ChEBI" id="CHEBI:17754"/>
    </ligand>
</feature>
<feature type="binding site" evidence="1">
    <location>
        <position position="95"/>
    </location>
    <ligand>
        <name>sn-glycerol 3-phosphate</name>
        <dbReference type="ChEBI" id="CHEBI:57597"/>
    </ligand>
</feature>
<feature type="binding site" evidence="1">
    <location>
        <position position="146"/>
    </location>
    <ligand>
        <name>glycerol</name>
        <dbReference type="ChEBI" id="CHEBI:17754"/>
    </ligand>
</feature>
<feature type="binding site" evidence="1">
    <location>
        <position position="146"/>
    </location>
    <ligand>
        <name>sn-glycerol 3-phosphate</name>
        <dbReference type="ChEBI" id="CHEBI:57597"/>
    </ligand>
</feature>
<feature type="binding site" evidence="1">
    <location>
        <position position="261"/>
    </location>
    <ligand>
        <name>glycerol</name>
        <dbReference type="ChEBI" id="CHEBI:17754"/>
    </ligand>
</feature>
<feature type="binding site" evidence="1">
    <location>
        <position position="261"/>
    </location>
    <ligand>
        <name>sn-glycerol 3-phosphate</name>
        <dbReference type="ChEBI" id="CHEBI:57597"/>
    </ligand>
</feature>
<feature type="binding site" evidence="1">
    <location>
        <position position="262"/>
    </location>
    <ligand>
        <name>glycerol</name>
        <dbReference type="ChEBI" id="CHEBI:17754"/>
    </ligand>
</feature>
<feature type="binding site" evidence="1">
    <location>
        <position position="283"/>
    </location>
    <ligand>
        <name>ADP</name>
        <dbReference type="ChEBI" id="CHEBI:456216"/>
    </ligand>
</feature>
<feature type="binding site" evidence="1">
    <location>
        <position position="283"/>
    </location>
    <ligand>
        <name>ATP</name>
        <dbReference type="ChEBI" id="CHEBI:30616"/>
    </ligand>
</feature>
<feature type="binding site" evidence="1">
    <location>
        <position position="327"/>
    </location>
    <ligand>
        <name>ADP</name>
        <dbReference type="ChEBI" id="CHEBI:456216"/>
    </ligand>
</feature>
<feature type="binding site" evidence="1">
    <location>
        <position position="327"/>
    </location>
    <ligand>
        <name>ATP</name>
        <dbReference type="ChEBI" id="CHEBI:30616"/>
    </ligand>
</feature>
<feature type="binding site" evidence="1">
    <location>
        <position position="331"/>
    </location>
    <ligand>
        <name>ATP</name>
        <dbReference type="ChEBI" id="CHEBI:30616"/>
    </ligand>
</feature>
<feature type="binding site" evidence="1">
    <location>
        <position position="428"/>
    </location>
    <ligand>
        <name>ADP</name>
        <dbReference type="ChEBI" id="CHEBI:456216"/>
    </ligand>
</feature>
<feature type="binding site" evidence="1">
    <location>
        <position position="428"/>
    </location>
    <ligand>
        <name>ATP</name>
        <dbReference type="ChEBI" id="CHEBI:30616"/>
    </ligand>
</feature>
<feature type="binding site" evidence="1">
    <location>
        <position position="432"/>
    </location>
    <ligand>
        <name>ADP</name>
        <dbReference type="ChEBI" id="CHEBI:456216"/>
    </ligand>
</feature>
<keyword id="KW-0067">ATP-binding</keyword>
<keyword id="KW-0319">Glycerol metabolism</keyword>
<keyword id="KW-0418">Kinase</keyword>
<keyword id="KW-0547">Nucleotide-binding</keyword>
<keyword id="KW-1185">Reference proteome</keyword>
<keyword id="KW-0808">Transferase</keyword>
<name>GLPK_MYCTO</name>
<protein>
    <recommendedName>
        <fullName evidence="1">Glycerol kinase</fullName>
        <ecNumber evidence="1">2.7.1.30</ecNumber>
    </recommendedName>
    <alternativeName>
        <fullName evidence="1">ATP:glycerol 3-phosphotransferase</fullName>
    </alternativeName>
    <alternativeName>
        <fullName evidence="1">Glycerokinase</fullName>
        <shortName evidence="1">GK</shortName>
    </alternativeName>
</protein>